<keyword id="KW-0963">Cytoplasm</keyword>
<keyword id="KW-0328">Glycosyltransferase</keyword>
<keyword id="KW-0660">Purine salvage</keyword>
<keyword id="KW-0808">Transferase</keyword>
<dbReference type="EC" id="2.4.2.7" evidence="1"/>
<dbReference type="EMBL" id="CP000151">
    <property type="protein sequence ID" value="ABB09708.1"/>
    <property type="molecule type" value="Genomic_DNA"/>
</dbReference>
<dbReference type="RefSeq" id="WP_011353218.1">
    <property type="nucleotide sequence ID" value="NZ_WNDV01000010.1"/>
</dbReference>
<dbReference type="SMR" id="Q39CV8"/>
<dbReference type="KEGG" id="bur:Bcep18194_A6114"/>
<dbReference type="HOGENOM" id="CLU_063339_3_0_4"/>
<dbReference type="UniPathway" id="UPA00588">
    <property type="reaction ID" value="UER00646"/>
</dbReference>
<dbReference type="Proteomes" id="UP000002705">
    <property type="component" value="Chromosome 1"/>
</dbReference>
<dbReference type="GO" id="GO:0005829">
    <property type="term" value="C:cytosol"/>
    <property type="evidence" value="ECO:0007669"/>
    <property type="project" value="TreeGrafter"/>
</dbReference>
<dbReference type="GO" id="GO:0003999">
    <property type="term" value="F:adenine phosphoribosyltransferase activity"/>
    <property type="evidence" value="ECO:0007669"/>
    <property type="project" value="UniProtKB-UniRule"/>
</dbReference>
<dbReference type="GO" id="GO:0006168">
    <property type="term" value="P:adenine salvage"/>
    <property type="evidence" value="ECO:0007669"/>
    <property type="project" value="InterPro"/>
</dbReference>
<dbReference type="GO" id="GO:0044209">
    <property type="term" value="P:AMP salvage"/>
    <property type="evidence" value="ECO:0007669"/>
    <property type="project" value="UniProtKB-UniRule"/>
</dbReference>
<dbReference type="GO" id="GO:0006166">
    <property type="term" value="P:purine ribonucleoside salvage"/>
    <property type="evidence" value="ECO:0007669"/>
    <property type="project" value="UniProtKB-KW"/>
</dbReference>
<dbReference type="CDD" id="cd06223">
    <property type="entry name" value="PRTases_typeI"/>
    <property type="match status" value="1"/>
</dbReference>
<dbReference type="FunFam" id="3.40.50.2020:FF:000021">
    <property type="entry name" value="Adenine phosphoribosyltransferase"/>
    <property type="match status" value="1"/>
</dbReference>
<dbReference type="Gene3D" id="3.40.50.2020">
    <property type="match status" value="1"/>
</dbReference>
<dbReference type="HAMAP" id="MF_00004">
    <property type="entry name" value="Aden_phosphoribosyltr"/>
    <property type="match status" value="1"/>
</dbReference>
<dbReference type="InterPro" id="IPR005764">
    <property type="entry name" value="Ade_phspho_trans"/>
</dbReference>
<dbReference type="InterPro" id="IPR050120">
    <property type="entry name" value="Adenine_PRTase"/>
</dbReference>
<dbReference type="InterPro" id="IPR000836">
    <property type="entry name" value="PRibTrfase_dom"/>
</dbReference>
<dbReference type="InterPro" id="IPR029057">
    <property type="entry name" value="PRTase-like"/>
</dbReference>
<dbReference type="NCBIfam" id="TIGR01090">
    <property type="entry name" value="apt"/>
    <property type="match status" value="1"/>
</dbReference>
<dbReference type="NCBIfam" id="NF002634">
    <property type="entry name" value="PRK02304.1-3"/>
    <property type="match status" value="1"/>
</dbReference>
<dbReference type="NCBIfam" id="NF002636">
    <property type="entry name" value="PRK02304.1-5"/>
    <property type="match status" value="1"/>
</dbReference>
<dbReference type="PANTHER" id="PTHR11776">
    <property type="entry name" value="ADENINE PHOSPHORIBOSYLTRANSFERASE"/>
    <property type="match status" value="1"/>
</dbReference>
<dbReference type="PANTHER" id="PTHR11776:SF7">
    <property type="entry name" value="PHOSPHORIBOSYLTRANSFERASE DOMAIN-CONTAINING PROTEIN"/>
    <property type="match status" value="1"/>
</dbReference>
<dbReference type="Pfam" id="PF00156">
    <property type="entry name" value="Pribosyltran"/>
    <property type="match status" value="1"/>
</dbReference>
<dbReference type="SUPFAM" id="SSF53271">
    <property type="entry name" value="PRTase-like"/>
    <property type="match status" value="1"/>
</dbReference>
<dbReference type="PROSITE" id="PS00103">
    <property type="entry name" value="PUR_PYR_PR_TRANSFER"/>
    <property type="match status" value="1"/>
</dbReference>
<reference key="1">
    <citation type="submission" date="2005-10" db="EMBL/GenBank/DDBJ databases">
        <title>Complete sequence of chromosome 1 of Burkholderia sp. 383.</title>
        <authorList>
            <consortium name="US DOE Joint Genome Institute"/>
            <person name="Copeland A."/>
            <person name="Lucas S."/>
            <person name="Lapidus A."/>
            <person name="Barry K."/>
            <person name="Detter J.C."/>
            <person name="Glavina T."/>
            <person name="Hammon N."/>
            <person name="Israni S."/>
            <person name="Pitluck S."/>
            <person name="Chain P."/>
            <person name="Malfatti S."/>
            <person name="Shin M."/>
            <person name="Vergez L."/>
            <person name="Schmutz J."/>
            <person name="Larimer F."/>
            <person name="Land M."/>
            <person name="Kyrpides N."/>
            <person name="Lykidis A."/>
            <person name="Richardson P."/>
        </authorList>
    </citation>
    <scope>NUCLEOTIDE SEQUENCE [LARGE SCALE GENOMIC DNA]</scope>
    <source>
        <strain>ATCC 17760 / DSM 23089 / LMG 22485 / NCIMB 9086 / R18194 / 383</strain>
    </source>
</reference>
<proteinExistence type="inferred from homology"/>
<accession>Q39CV8</accession>
<evidence type="ECO:0000255" key="1">
    <source>
        <dbReference type="HAMAP-Rule" id="MF_00004"/>
    </source>
</evidence>
<comment type="function">
    <text evidence="1">Catalyzes a salvage reaction resulting in the formation of AMP, that is energically less costly than de novo synthesis.</text>
</comment>
<comment type="catalytic activity">
    <reaction evidence="1">
        <text>AMP + diphosphate = 5-phospho-alpha-D-ribose 1-diphosphate + adenine</text>
        <dbReference type="Rhea" id="RHEA:16609"/>
        <dbReference type="ChEBI" id="CHEBI:16708"/>
        <dbReference type="ChEBI" id="CHEBI:33019"/>
        <dbReference type="ChEBI" id="CHEBI:58017"/>
        <dbReference type="ChEBI" id="CHEBI:456215"/>
        <dbReference type="EC" id="2.4.2.7"/>
    </reaction>
</comment>
<comment type="pathway">
    <text evidence="1">Purine metabolism; AMP biosynthesis via salvage pathway; AMP from adenine: step 1/1.</text>
</comment>
<comment type="subunit">
    <text evidence="1">Homodimer.</text>
</comment>
<comment type="subcellular location">
    <subcellularLocation>
        <location evidence="1">Cytoplasm</location>
    </subcellularLocation>
</comment>
<comment type="similarity">
    <text evidence="1">Belongs to the purine/pyrimidine phosphoribosyltransferase family.</text>
</comment>
<sequence>MPHSSSGAPLDPVAFIHSQIRTVPDWPQPGVMFRDITTLLQSPKALRILVDLFVERYVDAKLDYVAGLDARGFIIAPIVAYELSVGFVPIRKVGKLPYKTRSESYDLEYGSATVEIHEDACRPGDRVIIMDDLIATGGTMMAGRNLLQRLGAEVVEGAAIIDLPDLGGSALLRNAGLPVYTVTEFAGH</sequence>
<protein>
    <recommendedName>
        <fullName evidence="1">Adenine phosphoribosyltransferase</fullName>
        <shortName evidence="1">APRT</shortName>
        <ecNumber evidence="1">2.4.2.7</ecNumber>
    </recommendedName>
</protein>
<name>APT_BURL3</name>
<feature type="chain" id="PRO_0000321349" description="Adenine phosphoribosyltransferase">
    <location>
        <begin position="1"/>
        <end position="188"/>
    </location>
</feature>
<gene>
    <name evidence="1" type="primary">apt</name>
    <name type="ordered locus">Bcep18194_A6114</name>
</gene>
<organism>
    <name type="scientific">Burkholderia lata (strain ATCC 17760 / DSM 23089 / LMG 22485 / NCIMB 9086 / R18194 / 383)</name>
    <dbReference type="NCBI Taxonomy" id="482957"/>
    <lineage>
        <taxon>Bacteria</taxon>
        <taxon>Pseudomonadati</taxon>
        <taxon>Pseudomonadota</taxon>
        <taxon>Betaproteobacteria</taxon>
        <taxon>Burkholderiales</taxon>
        <taxon>Burkholderiaceae</taxon>
        <taxon>Burkholderia</taxon>
        <taxon>Burkholderia cepacia complex</taxon>
    </lineage>
</organism>